<proteinExistence type="inferred from homology"/>
<evidence type="ECO:0000250" key="1"/>
<evidence type="ECO:0000305" key="2"/>
<reference key="1">
    <citation type="journal article" date="2001" name="Nature">
        <title>Genome sequence and gene compaction of the eukaryote parasite Encephalitozoon cuniculi.</title>
        <authorList>
            <person name="Katinka M.D."/>
            <person name="Duprat S."/>
            <person name="Cornillot E."/>
            <person name="Metenier G."/>
            <person name="Thomarat F."/>
            <person name="Prensier G."/>
            <person name="Barbe V."/>
            <person name="Peyretaillade E."/>
            <person name="Brottier P."/>
            <person name="Wincker P."/>
            <person name="Delbac F."/>
            <person name="El Alaoui H."/>
            <person name="Peyret P."/>
            <person name="Saurin W."/>
            <person name="Gouy M."/>
            <person name="Weissenbach J."/>
            <person name="Vivares C.P."/>
        </authorList>
    </citation>
    <scope>NUCLEOTIDE SEQUENCE [LARGE SCALE GENOMIC DNA]</scope>
    <source>
        <strain>GB-M1</strain>
    </source>
</reference>
<dbReference type="EC" id="5.2.1.8"/>
<dbReference type="EMBL" id="AL590446">
    <property type="protein sequence ID" value="CAD25432.1"/>
    <property type="molecule type" value="Genomic_DNA"/>
</dbReference>
<dbReference type="RefSeq" id="NP_585828.1">
    <property type="nucleotide sequence ID" value="NM_001041450.1"/>
</dbReference>
<dbReference type="SMR" id="Q8SVB5"/>
<dbReference type="FunCoup" id="Q8SVB5">
    <property type="interactions" value="108"/>
</dbReference>
<dbReference type="STRING" id="284813.Q8SVB5"/>
<dbReference type="GeneID" id="859252"/>
<dbReference type="KEGG" id="ecu:ECU06_0720"/>
<dbReference type="VEuPathDB" id="MicrosporidiaDB:ECU06_0720"/>
<dbReference type="HOGENOM" id="CLU_030733_4_0_1"/>
<dbReference type="InParanoid" id="Q8SVB5"/>
<dbReference type="OMA" id="RFANCAV"/>
<dbReference type="OrthoDB" id="16120at2759"/>
<dbReference type="Proteomes" id="UP000000819">
    <property type="component" value="Chromosome VI"/>
</dbReference>
<dbReference type="GO" id="GO:0005737">
    <property type="term" value="C:cytoplasm"/>
    <property type="evidence" value="ECO:0007669"/>
    <property type="project" value="UniProtKB-SubCell"/>
</dbReference>
<dbReference type="GO" id="GO:0005634">
    <property type="term" value="C:nucleus"/>
    <property type="evidence" value="ECO:0007669"/>
    <property type="project" value="TreeGrafter"/>
</dbReference>
<dbReference type="GO" id="GO:0000159">
    <property type="term" value="C:protein phosphatase type 2A complex"/>
    <property type="evidence" value="ECO:0007669"/>
    <property type="project" value="TreeGrafter"/>
</dbReference>
<dbReference type="GO" id="GO:0003755">
    <property type="term" value="F:peptidyl-prolyl cis-trans isomerase activity"/>
    <property type="evidence" value="ECO:0007669"/>
    <property type="project" value="UniProtKB-KW"/>
</dbReference>
<dbReference type="GO" id="GO:0008160">
    <property type="term" value="F:protein tyrosine phosphatase activator activity"/>
    <property type="evidence" value="ECO:0007669"/>
    <property type="project" value="TreeGrafter"/>
</dbReference>
<dbReference type="GO" id="GO:0007052">
    <property type="term" value="P:mitotic spindle organization"/>
    <property type="evidence" value="ECO:0007669"/>
    <property type="project" value="TreeGrafter"/>
</dbReference>
<dbReference type="Gene3D" id="1.20.120.1150">
    <property type="match status" value="1"/>
</dbReference>
<dbReference type="InterPro" id="IPR004327">
    <property type="entry name" value="Phstyr_phstse_ac"/>
</dbReference>
<dbReference type="InterPro" id="IPR043170">
    <property type="entry name" value="PTPA_C_lid"/>
</dbReference>
<dbReference type="InterPro" id="IPR037218">
    <property type="entry name" value="PTPA_sf"/>
</dbReference>
<dbReference type="PANTHER" id="PTHR10012">
    <property type="entry name" value="SERINE/THREONINE-PROTEIN PHOSPHATASE 2A REGULATORY SUBUNIT B"/>
    <property type="match status" value="1"/>
</dbReference>
<dbReference type="PANTHER" id="PTHR10012:SF0">
    <property type="entry name" value="SERINE_THREONINE-PROTEIN PHOSPHATASE 2A ACTIVATOR"/>
    <property type="match status" value="1"/>
</dbReference>
<dbReference type="Pfam" id="PF03095">
    <property type="entry name" value="PTPA"/>
    <property type="match status" value="1"/>
</dbReference>
<dbReference type="PIRSF" id="PIRSF016325">
    <property type="entry name" value="Phstyr_phstse_ac"/>
    <property type="match status" value="1"/>
</dbReference>
<dbReference type="SUPFAM" id="SSF140984">
    <property type="entry name" value="PTPA-like"/>
    <property type="match status" value="1"/>
</dbReference>
<feature type="chain" id="PRO_0000226121" description="Serine/threonine-protein phosphatase 2A activator">
    <location>
        <begin position="1"/>
        <end position="247"/>
    </location>
</feature>
<name>PTPA_ENCCU</name>
<gene>
    <name type="ordered locus">ECU06_0720</name>
</gene>
<organism>
    <name type="scientific">Encephalitozoon cuniculi (strain GB-M1)</name>
    <name type="common">Microsporidian parasite</name>
    <dbReference type="NCBI Taxonomy" id="284813"/>
    <lineage>
        <taxon>Eukaryota</taxon>
        <taxon>Fungi</taxon>
        <taxon>Fungi incertae sedis</taxon>
        <taxon>Microsporidia</taxon>
        <taxon>Unikaryonidae</taxon>
        <taxon>Encephalitozoon</taxon>
    </lineage>
</organism>
<keyword id="KW-0963">Cytoplasm</keyword>
<keyword id="KW-0413">Isomerase</keyword>
<keyword id="KW-1185">Reference proteome</keyword>
<keyword id="KW-0697">Rotamase</keyword>
<sequence length="247" mass="28843">MKNGIDFVETEAYARIYNFILMVDDSIKNSEQRQSKHHMDVLADITRIVSETEKDPSPQRYANMAAKTVFKKIYDTYDDEYLRNSFGNQIRLDYGTGHELNFLCYLYAQYCRGSIGIDCVFTILVKYFEIVRLFITKFNLEPAGSHGMWGLDDYQFLPFLFGSSELCNTTLRFDELDGSKCYFVAVEKKLGGSSRILKSIMDKDWASINRGMIRMYDDHVLRRSVVTQHFIYGEYLRKDRSQANKDL</sequence>
<accession>Q8SVB5</accession>
<protein>
    <recommendedName>
        <fullName>Serine/threonine-protein phosphatase 2A activator</fullName>
        <ecNumber>5.2.1.8</ecNumber>
    </recommendedName>
    <alternativeName>
        <fullName>Peptidyl-prolyl cis-trans isomerase PTPA</fullName>
        <shortName>PPIase PTPA</shortName>
        <shortName>Rotamase PTPA</shortName>
    </alternativeName>
    <alternativeName>
        <fullName>Phosphotyrosyl phosphatase activator</fullName>
    </alternativeName>
</protein>
<comment type="function">
    <text evidence="1">PPIases accelerate the folding of proteins. It catalyzes the cis-trans isomerization of proline imidic peptide bonds in oligopeptides. Acts as a regulatory subunit for PP2A-like phosphatases modulating their activity or substrate specificity, probably by inducing a conformational change in the catalytic subunit, a direct target of the PPIase. Can reactivate inactive phosphatase PP2A-phosphatase methylesterase complexes (PP2Ai) in presence of ATP and Mg(2+) by dissociating the inactive form from the complex (By similarity).</text>
</comment>
<comment type="catalytic activity">
    <reaction>
        <text>[protein]-peptidylproline (omega=180) = [protein]-peptidylproline (omega=0)</text>
        <dbReference type="Rhea" id="RHEA:16237"/>
        <dbReference type="Rhea" id="RHEA-COMP:10747"/>
        <dbReference type="Rhea" id="RHEA-COMP:10748"/>
        <dbReference type="ChEBI" id="CHEBI:83833"/>
        <dbReference type="ChEBI" id="CHEBI:83834"/>
        <dbReference type="EC" id="5.2.1.8"/>
    </reaction>
</comment>
<comment type="subcellular location">
    <subcellularLocation>
        <location evidence="1">Cytoplasm</location>
    </subcellularLocation>
</comment>
<comment type="similarity">
    <text evidence="2">Belongs to the PTPA-type PPIase family.</text>
</comment>